<proteinExistence type="evidence at transcript level"/>
<comment type="function">
    <text>Orphan nuclear receptor.</text>
</comment>
<comment type="subcellular location">
    <subcellularLocation>
        <location evidence="1">Nucleus</location>
    </subcellularLocation>
</comment>
<comment type="alternative products">
    <event type="alternative splicing"/>
    <isoform>
        <id>Q94407-1</id>
        <name>a</name>
        <sequence type="displayed"/>
    </isoform>
    <isoform>
        <id>Q94407-2</id>
        <name>b</name>
        <sequence type="described" ref="VSP_020165 VSP_020166 VSP_020167"/>
    </isoform>
</comment>
<comment type="similarity">
    <text evidence="4">Belongs to the nuclear hormone receptor family.</text>
</comment>
<sequence length="817" mass="90706">MYNTRRSAYMNSCSTAMELPPQSLHQNWQDTEYVNTTCSSDMNSDMSMYNDDKDDPFYEDEGSGGGTSGGGKKSSRKRANTTSSSGGNEKESKRTANKVCRVCGDKAFSYNFNVITCESCKAFFRRNANKEKEIRCPFNEQCEINMVSRRFCQRCRLTKCFAVGMKKEWIMSEEARLEKKQRVEENRERRLQDAMNRALEEACMEDESENSYDEAPAPSHQMSVRQYLANDDAPHKSSDEVQPHLGHHGYNQKEDKMMNFYQDGPSDQGDYSLPSNSCASSSQLDTSVNCGATTIADNGASPSNTVTIPAAVDVERKPIPTNVLFSASMSAIQDVAAIISNAETKNLGMCAPDVVNENLMNVAQAAVQAQAIVNHTQQLAAAVVAQQVVSNMAPVMPTVNPLDPLLAPAFIAPPMPTPINVPITTPIAGALSTPLPPPIVPPGHSSINPVIPIIPKEMPVSVSLLNQLEQTPAEMVTVPKDMLMKLIQKNSRSTCTCSCMCGRYPPGSCIVDEVTKDLLNGGSSNSSNATDRDETRLETTEDMQMNGLLPGDCNSSIQWLNQQSSAQAFVDPITHSMTAEEAQTQRERRDSIFGSFSAADQGTVTQPKSVQEETIWEHTVAENESRELSDEEIEKMEELTEISNQWISMRLDSMPILDLFSKKNVEKIVNGLKLLSSFRFLPQVDKRSVVKRGLFNYCVVKWMQHKESMSIDGLSDAARRDFMNIIRREEFNYRVQPGAFNTLAISVLFHSISDNLISTDVYMEHLVFKKLLDKNLPIKVSSDTVYNNYYPYIIKAAKHLEKATKGLSDELVAHAVS</sequence>
<accession>Q94407</accession>
<accession>Q9BJL1</accession>
<accession>Q9BJL2</accession>
<feature type="chain" id="PRO_0000053784" description="Nuclear hormone receptor family member nhr-48">
    <location>
        <begin position="1"/>
        <end position="817"/>
    </location>
</feature>
<feature type="DNA-binding region" description="Nuclear receptor" evidence="1">
    <location>
        <begin position="97"/>
        <end position="172"/>
    </location>
</feature>
<feature type="zinc finger region" description="NR C4-type" evidence="1">
    <location>
        <begin position="100"/>
        <end position="120"/>
    </location>
</feature>
<feature type="zinc finger region" description="NR C4-type" evidence="1">
    <location>
        <begin position="136"/>
        <end position="155"/>
    </location>
</feature>
<feature type="region of interest" description="Disordered" evidence="2">
    <location>
        <begin position="49"/>
        <end position="91"/>
    </location>
</feature>
<feature type="region of interest" description="Disordered" evidence="2">
    <location>
        <begin position="202"/>
        <end position="221"/>
    </location>
</feature>
<feature type="region of interest" description="Disordered" evidence="2">
    <location>
        <begin position="258"/>
        <end position="284"/>
    </location>
</feature>
<feature type="compositionally biased region" description="Acidic residues" evidence="2">
    <location>
        <begin position="52"/>
        <end position="62"/>
    </location>
</feature>
<feature type="compositionally biased region" description="Gly residues" evidence="2">
    <location>
        <begin position="63"/>
        <end position="72"/>
    </location>
</feature>
<feature type="compositionally biased region" description="Acidic residues" evidence="2">
    <location>
        <begin position="202"/>
        <end position="212"/>
    </location>
</feature>
<feature type="compositionally biased region" description="Polar residues" evidence="2">
    <location>
        <begin position="273"/>
        <end position="284"/>
    </location>
</feature>
<feature type="splice variant" id="VSP_020165" description="In isoform b." evidence="3">
    <original>V</original>
    <variation>VSLAEKSHRLEELFV</variation>
    <location>
        <position position="163"/>
    </location>
</feature>
<feature type="splice variant" id="VSP_020166" description="In isoform b." evidence="3">
    <original>G</original>
    <variation>GYSNHDF</variation>
    <location>
        <position position="269"/>
    </location>
</feature>
<feature type="splice variant" id="VSP_020167" description="In isoform b." evidence="3">
    <location>
        <begin position="292"/>
        <end position="348"/>
    </location>
</feature>
<reference key="1">
    <citation type="journal article" date="2005" name="J. Mol. Evol.">
        <title>Explosive lineage-specific expansion of the orphan nuclear receptor HNF4 in nematodes.</title>
        <authorList>
            <person name="Robinson-Rechavi M."/>
            <person name="Maina C.V."/>
            <person name="Gissendanner C.R."/>
            <person name="Laudet V."/>
            <person name="Sluder A."/>
        </authorList>
    </citation>
    <scope>NUCLEOTIDE SEQUENCE [MRNA] (ISOFORM A)</scope>
    <scope>NUCLEOTIDE SEQUENCE [MRNA] OF 248-817 (ISOFORM B)</scope>
</reference>
<reference key="2">
    <citation type="journal article" date="1998" name="Science">
        <title>Genome sequence of the nematode C. elegans: a platform for investigating biology.</title>
        <authorList>
            <consortium name="The C. elegans sequencing consortium"/>
        </authorList>
    </citation>
    <scope>NUCLEOTIDE SEQUENCE [LARGE SCALE GENOMIC DNA]</scope>
    <scope>ALTERNATIVE SPLICING</scope>
    <source>
        <strain>Bristol N2</strain>
    </source>
</reference>
<dbReference type="EMBL" id="AF332204">
    <property type="protein sequence ID" value="AAK17975.1"/>
    <property type="molecule type" value="mRNA"/>
</dbReference>
<dbReference type="EMBL" id="AF332205">
    <property type="protein sequence ID" value="AAK17976.1"/>
    <property type="molecule type" value="mRNA"/>
</dbReference>
<dbReference type="EMBL" id="Z79604">
    <property type="protein sequence ID" value="CAB01900.1"/>
    <property type="molecule type" value="Genomic_DNA"/>
</dbReference>
<dbReference type="EMBL" id="Z79604">
    <property type="protein sequence ID" value="CAD36502.1"/>
    <property type="molecule type" value="Genomic_DNA"/>
</dbReference>
<dbReference type="PIR" id="T27941">
    <property type="entry name" value="T27941"/>
</dbReference>
<dbReference type="RefSeq" id="NP_001024998.1">
    <property type="nucleotide sequence ID" value="NM_001029827.3"/>
</dbReference>
<dbReference type="RefSeq" id="NP_001024999.1">
    <property type="nucleotide sequence ID" value="NM_001029828.2"/>
</dbReference>
<dbReference type="SMR" id="Q94407"/>
<dbReference type="BioGRID" id="46553">
    <property type="interactions" value="2"/>
</dbReference>
<dbReference type="DIP" id="DIP-24311N"/>
<dbReference type="FunCoup" id="Q94407">
    <property type="interactions" value="1471"/>
</dbReference>
<dbReference type="IntAct" id="Q94407">
    <property type="interactions" value="1"/>
</dbReference>
<dbReference type="STRING" id="6239.ZK662.3b.2"/>
<dbReference type="PaxDb" id="6239-ZK662.3b"/>
<dbReference type="PeptideAtlas" id="Q94407"/>
<dbReference type="EnsemblMetazoa" id="ZK662.3a.1">
    <property type="protein sequence ID" value="ZK662.3a.1"/>
    <property type="gene ID" value="WBGene00003638"/>
</dbReference>
<dbReference type="EnsemblMetazoa" id="ZK662.3b.1">
    <property type="protein sequence ID" value="ZK662.3b.1"/>
    <property type="gene ID" value="WBGene00003638"/>
</dbReference>
<dbReference type="UCSC" id="ZK662.3b">
    <molecule id="Q94407-1"/>
    <property type="organism name" value="c. elegans"/>
</dbReference>
<dbReference type="AGR" id="WB:WBGene00003638"/>
<dbReference type="WormBase" id="ZK662.3a">
    <molecule id="Q94407-2"/>
    <property type="protein sequence ID" value="CE18456"/>
    <property type="gene ID" value="WBGene00003638"/>
    <property type="gene designation" value="nhr-48"/>
</dbReference>
<dbReference type="WormBase" id="ZK662.3b">
    <molecule id="Q94407-1"/>
    <property type="protein sequence ID" value="CE31141"/>
    <property type="gene ID" value="WBGene00003638"/>
    <property type="gene designation" value="nhr-48"/>
</dbReference>
<dbReference type="eggNOG" id="KOG3575">
    <property type="taxonomic scope" value="Eukaryota"/>
</dbReference>
<dbReference type="GeneTree" id="ENSGT00940000171624"/>
<dbReference type="InParanoid" id="Q94407"/>
<dbReference type="OMA" id="KWMQHKE"/>
<dbReference type="Reactome" id="R-CEL-196791">
    <property type="pathway name" value="Vitamin D (calciferol) metabolism"/>
</dbReference>
<dbReference type="Reactome" id="R-CEL-383280">
    <property type="pathway name" value="Nuclear Receptor transcription pathway"/>
</dbReference>
<dbReference type="PRO" id="PR:Q94407"/>
<dbReference type="Proteomes" id="UP000001940">
    <property type="component" value="Chromosome X"/>
</dbReference>
<dbReference type="Bgee" id="WBGene00003638">
    <property type="expression patterns" value="Expressed in pharyngeal muscle cell (C elegans) and 3 other cell types or tissues"/>
</dbReference>
<dbReference type="ExpressionAtlas" id="Q94407">
    <property type="expression patterns" value="baseline and differential"/>
</dbReference>
<dbReference type="GO" id="GO:0005634">
    <property type="term" value="C:nucleus"/>
    <property type="evidence" value="ECO:0000318"/>
    <property type="project" value="GO_Central"/>
</dbReference>
<dbReference type="GO" id="GO:0004879">
    <property type="term" value="F:nuclear receptor activity"/>
    <property type="evidence" value="ECO:0000318"/>
    <property type="project" value="GO_Central"/>
</dbReference>
<dbReference type="GO" id="GO:0000978">
    <property type="term" value="F:RNA polymerase II cis-regulatory region sequence-specific DNA binding"/>
    <property type="evidence" value="ECO:0000318"/>
    <property type="project" value="GO_Central"/>
</dbReference>
<dbReference type="GO" id="GO:0008270">
    <property type="term" value="F:zinc ion binding"/>
    <property type="evidence" value="ECO:0007669"/>
    <property type="project" value="UniProtKB-KW"/>
</dbReference>
<dbReference type="GO" id="GO:0030154">
    <property type="term" value="P:cell differentiation"/>
    <property type="evidence" value="ECO:0000318"/>
    <property type="project" value="GO_Central"/>
</dbReference>
<dbReference type="GO" id="GO:0030522">
    <property type="term" value="P:intracellular receptor signaling pathway"/>
    <property type="evidence" value="ECO:0000318"/>
    <property type="project" value="GO_Central"/>
</dbReference>
<dbReference type="GO" id="GO:0000122">
    <property type="term" value="P:negative regulation of transcription by RNA polymerase II"/>
    <property type="evidence" value="ECO:0000318"/>
    <property type="project" value="GO_Central"/>
</dbReference>
<dbReference type="GO" id="GO:0045944">
    <property type="term" value="P:positive regulation of transcription by RNA polymerase II"/>
    <property type="evidence" value="ECO:0000318"/>
    <property type="project" value="GO_Central"/>
</dbReference>
<dbReference type="CDD" id="cd06966">
    <property type="entry name" value="NR_DBD_CAR"/>
    <property type="match status" value="1"/>
</dbReference>
<dbReference type="FunFam" id="3.30.50.10:FF:000042">
    <property type="entry name" value="Nuclear hormone receptor HR96"/>
    <property type="match status" value="1"/>
</dbReference>
<dbReference type="Gene3D" id="3.30.50.10">
    <property type="entry name" value="Erythroid Transcription Factor GATA-1, subunit A"/>
    <property type="match status" value="1"/>
</dbReference>
<dbReference type="InterPro" id="IPR050234">
    <property type="entry name" value="Nuclear_hormone_rcpt_NR1"/>
</dbReference>
<dbReference type="InterPro" id="IPR001628">
    <property type="entry name" value="Znf_hrmn_rcpt"/>
</dbReference>
<dbReference type="InterPro" id="IPR013088">
    <property type="entry name" value="Znf_NHR/GATA"/>
</dbReference>
<dbReference type="PANTHER" id="PTHR24082">
    <property type="entry name" value="NUCLEAR HORMONE RECEPTOR"/>
    <property type="match status" value="1"/>
</dbReference>
<dbReference type="PANTHER" id="PTHR24082:SF508">
    <property type="entry name" value="NUCLEAR HORMONE RECEPTOR FAMILY MEMBER NHR-48"/>
    <property type="match status" value="1"/>
</dbReference>
<dbReference type="Pfam" id="PF00105">
    <property type="entry name" value="zf-C4"/>
    <property type="match status" value="1"/>
</dbReference>
<dbReference type="PRINTS" id="PR00047">
    <property type="entry name" value="STROIDFINGER"/>
</dbReference>
<dbReference type="SMART" id="SM00399">
    <property type="entry name" value="ZnF_C4"/>
    <property type="match status" value="1"/>
</dbReference>
<dbReference type="SUPFAM" id="SSF57716">
    <property type="entry name" value="Glucocorticoid receptor-like (DNA-binding domain)"/>
    <property type="match status" value="1"/>
</dbReference>
<dbReference type="PROSITE" id="PS00031">
    <property type="entry name" value="NUCLEAR_REC_DBD_1"/>
    <property type="match status" value="1"/>
</dbReference>
<dbReference type="PROSITE" id="PS51030">
    <property type="entry name" value="NUCLEAR_REC_DBD_2"/>
    <property type="match status" value="1"/>
</dbReference>
<organism>
    <name type="scientific">Caenorhabditis elegans</name>
    <dbReference type="NCBI Taxonomy" id="6239"/>
    <lineage>
        <taxon>Eukaryota</taxon>
        <taxon>Metazoa</taxon>
        <taxon>Ecdysozoa</taxon>
        <taxon>Nematoda</taxon>
        <taxon>Chromadorea</taxon>
        <taxon>Rhabditida</taxon>
        <taxon>Rhabditina</taxon>
        <taxon>Rhabditomorpha</taxon>
        <taxon>Rhabditoidea</taxon>
        <taxon>Rhabditidae</taxon>
        <taxon>Peloderinae</taxon>
        <taxon>Caenorhabditis</taxon>
    </lineage>
</organism>
<evidence type="ECO:0000255" key="1">
    <source>
        <dbReference type="PROSITE-ProRule" id="PRU00407"/>
    </source>
</evidence>
<evidence type="ECO:0000256" key="2">
    <source>
        <dbReference type="SAM" id="MobiDB-lite"/>
    </source>
</evidence>
<evidence type="ECO:0000303" key="3">
    <source>
    </source>
</evidence>
<evidence type="ECO:0000305" key="4"/>
<gene>
    <name type="primary">nhr-48</name>
    <name type="ORF">ZK662.3</name>
</gene>
<name>NHR48_CAEEL</name>
<protein>
    <recommendedName>
        <fullName>Nuclear hormone receptor family member nhr-48</fullName>
    </recommendedName>
</protein>
<keyword id="KW-0025">Alternative splicing</keyword>
<keyword id="KW-0238">DNA-binding</keyword>
<keyword id="KW-0479">Metal-binding</keyword>
<keyword id="KW-0539">Nucleus</keyword>
<keyword id="KW-0675">Receptor</keyword>
<keyword id="KW-1185">Reference proteome</keyword>
<keyword id="KW-0804">Transcription</keyword>
<keyword id="KW-0805">Transcription regulation</keyword>
<keyword id="KW-0862">Zinc</keyword>
<keyword id="KW-0863">Zinc-finger</keyword>